<protein>
    <recommendedName>
        <fullName evidence="2">Small ribosomal subunit protein uS15c</fullName>
    </recommendedName>
    <alternativeName>
        <fullName>30S ribosomal protein S15, chloroplastic</fullName>
    </alternativeName>
</protein>
<gene>
    <name type="primary">rps15</name>
</gene>
<comment type="subunit">
    <text evidence="1">Part of the 30S ribosomal subunit.</text>
</comment>
<comment type="subcellular location">
    <subcellularLocation>
        <location>Plastid</location>
        <location>Chloroplast</location>
    </subcellularLocation>
</comment>
<comment type="similarity">
    <text evidence="2">Belongs to the universal ribosomal protein uS15 family.</text>
</comment>
<name>RR15_OLIPU</name>
<organism>
    <name type="scientific">Olimarabidopsis pumila</name>
    <name type="common">Dwarf rocket</name>
    <name type="synonym">Arabidopsis griffithiana</name>
    <dbReference type="NCBI Taxonomy" id="74718"/>
    <lineage>
        <taxon>Eukaryota</taxon>
        <taxon>Viridiplantae</taxon>
        <taxon>Streptophyta</taxon>
        <taxon>Embryophyta</taxon>
        <taxon>Tracheophyta</taxon>
        <taxon>Spermatophyta</taxon>
        <taxon>Magnoliopsida</taxon>
        <taxon>eudicotyledons</taxon>
        <taxon>Gunneridae</taxon>
        <taxon>Pentapetalae</taxon>
        <taxon>rosids</taxon>
        <taxon>malvids</taxon>
        <taxon>Brassicales</taxon>
        <taxon>Brassicaceae</taxon>
        <taxon>Alyssopsideae</taxon>
        <taxon>Olimarabidopsis</taxon>
    </lineage>
</organism>
<geneLocation type="chloroplast"/>
<accession>A4QJY9</accession>
<sequence>MIKNAFISFQEQKEESRGSVEFQVFSFTNKIRRLTSHLELHRKDYLSQRGLRKILGKRQRLLAYLSKKNRVRYKELINQLNIRELKTR</sequence>
<feature type="chain" id="PRO_0000354274" description="Small ribosomal subunit protein uS15c">
    <location>
        <begin position="1"/>
        <end position="88"/>
    </location>
</feature>
<proteinExistence type="inferred from homology"/>
<evidence type="ECO:0000250" key="1"/>
<evidence type="ECO:0000305" key="2"/>
<reference key="1">
    <citation type="submission" date="2007-03" db="EMBL/GenBank/DDBJ databases">
        <title>Sequence analysis of Arabidopsis pumila JS2 chloroplast DNA.</title>
        <authorList>
            <person name="Hosouchi T."/>
            <person name="Tsuruoka H."/>
            <person name="Kotani H."/>
        </authorList>
    </citation>
    <scope>NUCLEOTIDE SEQUENCE [LARGE SCALE GENOMIC DNA]</scope>
</reference>
<keyword id="KW-0150">Chloroplast</keyword>
<keyword id="KW-0934">Plastid</keyword>
<keyword id="KW-0687">Ribonucleoprotein</keyword>
<keyword id="KW-0689">Ribosomal protein</keyword>
<dbReference type="EMBL" id="AP009368">
    <property type="protein sequence ID" value="BAF49997.1"/>
    <property type="molecule type" value="Genomic_DNA"/>
</dbReference>
<dbReference type="RefSeq" id="YP_001123172.1">
    <property type="nucleotide sequence ID" value="NC_009267.1"/>
</dbReference>
<dbReference type="SMR" id="A4QJY9"/>
<dbReference type="GeneID" id="4962409"/>
<dbReference type="GO" id="GO:0009507">
    <property type="term" value="C:chloroplast"/>
    <property type="evidence" value="ECO:0007669"/>
    <property type="project" value="UniProtKB-SubCell"/>
</dbReference>
<dbReference type="GO" id="GO:1990904">
    <property type="term" value="C:ribonucleoprotein complex"/>
    <property type="evidence" value="ECO:0007669"/>
    <property type="project" value="UniProtKB-KW"/>
</dbReference>
<dbReference type="GO" id="GO:0005840">
    <property type="term" value="C:ribosome"/>
    <property type="evidence" value="ECO:0007669"/>
    <property type="project" value="UniProtKB-KW"/>
</dbReference>
<dbReference type="GO" id="GO:0003735">
    <property type="term" value="F:structural constituent of ribosome"/>
    <property type="evidence" value="ECO:0007669"/>
    <property type="project" value="InterPro"/>
</dbReference>
<dbReference type="GO" id="GO:0006412">
    <property type="term" value="P:translation"/>
    <property type="evidence" value="ECO:0007669"/>
    <property type="project" value="UniProtKB-UniRule"/>
</dbReference>
<dbReference type="CDD" id="cd00353">
    <property type="entry name" value="Ribosomal_S15p_S13e"/>
    <property type="match status" value="1"/>
</dbReference>
<dbReference type="FunFam" id="1.10.287.10:FF:000011">
    <property type="entry name" value="30S ribosomal protein S15, chloroplastic"/>
    <property type="match status" value="1"/>
</dbReference>
<dbReference type="Gene3D" id="1.10.287.10">
    <property type="entry name" value="S15/NS1, RNA-binding"/>
    <property type="match status" value="1"/>
</dbReference>
<dbReference type="HAMAP" id="MF_01343_B">
    <property type="entry name" value="Ribosomal_uS15_B"/>
    <property type="match status" value="1"/>
</dbReference>
<dbReference type="InterPro" id="IPR000589">
    <property type="entry name" value="Ribosomal_uS15"/>
</dbReference>
<dbReference type="InterPro" id="IPR005290">
    <property type="entry name" value="Ribosomal_uS15_bac-type"/>
</dbReference>
<dbReference type="InterPro" id="IPR009068">
    <property type="entry name" value="uS15_NS1_RNA-bd_sf"/>
</dbReference>
<dbReference type="NCBIfam" id="TIGR00952">
    <property type="entry name" value="S15_bact"/>
    <property type="match status" value="1"/>
</dbReference>
<dbReference type="PANTHER" id="PTHR23321">
    <property type="entry name" value="RIBOSOMAL PROTEIN S15, BACTERIAL AND ORGANELLAR"/>
    <property type="match status" value="1"/>
</dbReference>
<dbReference type="PANTHER" id="PTHR23321:SF26">
    <property type="entry name" value="SMALL RIBOSOMAL SUBUNIT PROTEIN US15M"/>
    <property type="match status" value="1"/>
</dbReference>
<dbReference type="Pfam" id="PF00312">
    <property type="entry name" value="Ribosomal_S15"/>
    <property type="match status" value="1"/>
</dbReference>
<dbReference type="SMART" id="SM01387">
    <property type="entry name" value="Ribosomal_S15"/>
    <property type="match status" value="1"/>
</dbReference>
<dbReference type="SUPFAM" id="SSF47060">
    <property type="entry name" value="S15/NS1 RNA-binding domain"/>
    <property type="match status" value="1"/>
</dbReference>
<dbReference type="PROSITE" id="PS00362">
    <property type="entry name" value="RIBOSOMAL_S15"/>
    <property type="match status" value="1"/>
</dbReference>